<proteinExistence type="evidence at protein level"/>
<sequence length="1002" mass="110112">MALPVAEGTADTPLSPARDDSGSTSSGMWAALYDYEARGEDELSLRRGQLVEVLSQDAAVSGDEGWWAGQVQRRLGIFPASYVAPCGPVPPPAPPPPRPCSPVHVDFERLELKELIGAGGFGQVYRATWQGQEVAVKAARRDPEQDAAAAAESVRREARLFAMLRHPNIIQLRGVCLRQPHLCLVLEFARGGALNRALAAAASDPRAPGPRRARRIPPQVLVNWAVQIARGMLYLHEEAVVPILHRDLKSSNILLLEKIEHDDICNKTLKITDFGLAREWHRTTRMSAAGTYAWMAPEVIRSSLFSKGSDIWSYGVLLWELLTGEVPYRGIDGLAVAYGVAVNKLTLPIPSTCPEPFAKLMKECWEQDPHIRPSFALILQQLTAIEEAVLTNMPQESFHSMQEDWKLEIQQMFSELRTKEKELRSREEELSRAALQQKSQELLLRRREQQLAEREIDVLERELNVLIFQLSQEAPHVKKRKGRFRRGRLRLKDGHRISLPSDFQHKITVQASPTLDKRRSSDSGLCSPPGSPLMLPRLRAIQLTSDENNKTRGRNMVFRQEDFEDVKRSFKKKGCTWGPSSVQTKERPEGRERVRPLSDGNSPWSSLLIKSQKTTPLASLFVDQPGSCEEQKLVPEGLEHRKPKQTKFPGQAHVGLPLCKDSQREDSSEAESREEGSPKGSPVNNVGAPMLRKKTESALCECGMLLASMALGLDVRKLHGAQAPAKPSPKMEKKEEGALQPASRCQSSPSSLLRQPSAGRAPSGGSTLLLPSAPSHSSKSSLSMKCLLQAGKEESSLGNARDLCGPTTLTPDPGSAAPESGCELIPGLRPKTDYGVLRSMPHAILEQTGERLPGCAIVGDKGCHHMQMGSEETPLWLQSAPEDSGLPHSPSPGPQRDLASQASLVKPEGVLGECQACPALPQRPHTASVRTTSPPTWVCDKDHQVPALACLLGAQERSRCQTPSLLDASIEGQKKDCAMPLCRVKSVMCQPSIYALEKDFLT</sequence>
<evidence type="ECO:0000250" key="1"/>
<evidence type="ECO:0000250" key="2">
    <source>
        <dbReference type="UniProtKB" id="P28523"/>
    </source>
</evidence>
<evidence type="ECO:0000250" key="3">
    <source>
        <dbReference type="UniProtKB" id="P80192"/>
    </source>
</evidence>
<evidence type="ECO:0000250" key="4">
    <source>
        <dbReference type="UniProtKB" id="Q5TCX8"/>
    </source>
</evidence>
<evidence type="ECO:0000255" key="5">
    <source>
        <dbReference type="PROSITE-ProRule" id="PRU00159"/>
    </source>
</evidence>
<evidence type="ECO:0000255" key="6">
    <source>
        <dbReference type="PROSITE-ProRule" id="PRU00192"/>
    </source>
</evidence>
<evidence type="ECO:0000255" key="7">
    <source>
        <dbReference type="PROSITE-ProRule" id="PRU10027"/>
    </source>
</evidence>
<evidence type="ECO:0000256" key="8">
    <source>
        <dbReference type="SAM" id="MobiDB-lite"/>
    </source>
</evidence>
<evidence type="ECO:0000305" key="9"/>
<evidence type="ECO:0000312" key="10">
    <source>
        <dbReference type="EMBL" id="AAH21891.1"/>
    </source>
</evidence>
<evidence type="ECO:0000312" key="11">
    <source>
        <dbReference type="EMBL" id="BAD90469.1"/>
    </source>
</evidence>
<evidence type="ECO:0007744" key="12">
    <source>
    </source>
</evidence>
<feature type="chain" id="PRO_0000302761" description="Mitogen-activated protein kinase kinase kinase 21">
    <location>
        <begin position="1"/>
        <end position="1002"/>
    </location>
</feature>
<feature type="domain" description="SH3" evidence="6">
    <location>
        <begin position="24"/>
        <end position="88"/>
    </location>
</feature>
<feature type="domain" description="Protein kinase" evidence="5">
    <location>
        <begin position="110"/>
        <end position="390"/>
    </location>
</feature>
<feature type="region of interest" description="Disordered" evidence="8">
    <location>
        <begin position="1"/>
        <end position="26"/>
    </location>
</feature>
<feature type="region of interest" description="Leucine-zipper 1">
    <location>
        <begin position="409"/>
        <end position="430"/>
    </location>
</feature>
<feature type="region of interest" description="Leucine-zipper 2">
    <location>
        <begin position="444"/>
        <end position="466"/>
    </location>
</feature>
<feature type="region of interest" description="Disordered" evidence="8">
    <location>
        <begin position="508"/>
        <end position="531"/>
    </location>
</feature>
<feature type="region of interest" description="Disordered" evidence="8">
    <location>
        <begin position="574"/>
        <end position="604"/>
    </location>
</feature>
<feature type="region of interest" description="Disordered" evidence="8">
    <location>
        <begin position="640"/>
        <end position="689"/>
    </location>
</feature>
<feature type="region of interest" description="Disordered" evidence="8">
    <location>
        <begin position="721"/>
        <end position="778"/>
    </location>
</feature>
<feature type="region of interest" description="Disordered" evidence="8">
    <location>
        <begin position="797"/>
        <end position="823"/>
    </location>
</feature>
<feature type="region of interest" description="Disordered" evidence="8">
    <location>
        <begin position="878"/>
        <end position="899"/>
    </location>
</feature>
<feature type="compositionally biased region" description="Basic and acidic residues" evidence="8">
    <location>
        <begin position="584"/>
        <end position="596"/>
    </location>
</feature>
<feature type="compositionally biased region" description="Basic and acidic residues" evidence="8">
    <location>
        <begin position="661"/>
        <end position="677"/>
    </location>
</feature>
<feature type="compositionally biased region" description="Low complexity" evidence="8">
    <location>
        <begin position="740"/>
        <end position="758"/>
    </location>
</feature>
<feature type="compositionally biased region" description="Low complexity" evidence="8">
    <location>
        <begin position="766"/>
        <end position="778"/>
    </location>
</feature>
<feature type="active site" description="Proton acceptor" evidence="2 5 7">
    <location>
        <position position="247"/>
    </location>
</feature>
<feature type="binding site" evidence="2 5">
    <location>
        <begin position="116"/>
        <end position="124"/>
    </location>
    <ligand>
        <name>ATP</name>
        <dbReference type="ChEBI" id="CHEBI:30616"/>
    </ligand>
</feature>
<feature type="binding site" evidence="2 5">
    <location>
        <position position="137"/>
    </location>
    <ligand>
        <name>ATP</name>
        <dbReference type="ChEBI" id="CHEBI:30616"/>
    </ligand>
</feature>
<feature type="modified residue" description="Phosphothreonine; by autocatalysis" evidence="3">
    <location>
        <position position="283"/>
    </location>
</feature>
<feature type="modified residue" description="Phosphoserine; by autocatalysis and MAP4K1" evidence="3">
    <location>
        <position position="287"/>
    </location>
</feature>
<feature type="modified residue" description="Phosphoserine" evidence="4">
    <location>
        <position position="512"/>
    </location>
</feature>
<feature type="modified residue" description="Phosphoserine" evidence="12">
    <location>
        <position position="527"/>
    </location>
</feature>
<feature type="modified residue" description="Phosphoserine" evidence="12">
    <location>
        <position position="531"/>
    </location>
</feature>
<feature type="modified residue" description="Phosphothreonine" evidence="12">
    <location>
        <position position="576"/>
    </location>
</feature>
<feature type="modified residue" description="Phosphoserine" evidence="12">
    <location>
        <position position="598"/>
    </location>
</feature>
<feature type="sequence conflict" description="In Ref. 2; AAH21891." evidence="9" ref="2">
    <location>
        <position position="411"/>
    </location>
</feature>
<organism>
    <name type="scientific">Mus musculus</name>
    <name type="common">Mouse</name>
    <dbReference type="NCBI Taxonomy" id="10090"/>
    <lineage>
        <taxon>Eukaryota</taxon>
        <taxon>Metazoa</taxon>
        <taxon>Chordata</taxon>
        <taxon>Craniata</taxon>
        <taxon>Vertebrata</taxon>
        <taxon>Euteleostomi</taxon>
        <taxon>Mammalia</taxon>
        <taxon>Eutheria</taxon>
        <taxon>Euarchontoglires</taxon>
        <taxon>Glires</taxon>
        <taxon>Rodentia</taxon>
        <taxon>Myomorpha</taxon>
        <taxon>Muroidea</taxon>
        <taxon>Muridae</taxon>
        <taxon>Murinae</taxon>
        <taxon>Mus</taxon>
        <taxon>Mus</taxon>
    </lineage>
</organism>
<keyword id="KW-0067">ATP-binding</keyword>
<keyword id="KW-0418">Kinase</keyword>
<keyword id="KW-0547">Nucleotide-binding</keyword>
<keyword id="KW-0597">Phosphoprotein</keyword>
<keyword id="KW-1185">Reference proteome</keyword>
<keyword id="KW-0677">Repeat</keyword>
<keyword id="KW-0723">Serine/threonine-protein kinase</keyword>
<keyword id="KW-0728">SH3 domain</keyword>
<keyword id="KW-0808">Transferase</keyword>
<reference evidence="11" key="1">
    <citation type="submission" date="2005-02" db="EMBL/GenBank/DDBJ databases">
        <title>Prediction of the coding sequences of mouse homologues of KIAA gene. The complete nucleotide sequences of mouse KIAA-homologous cDNAs identified by screening of terminal sequences of cDNA clones randomly sampled from size-fractionated libraries.</title>
        <authorList>
            <person name="Okazaki N."/>
            <person name="Kikuno R.F."/>
            <person name="Ohara R."/>
            <person name="Inamoto S."/>
            <person name="Nagase T."/>
            <person name="Ohara O."/>
            <person name="Koga H."/>
        </authorList>
    </citation>
    <scope>NUCLEOTIDE SEQUENCE [LARGE SCALE MRNA]</scope>
    <source>
        <tissue evidence="11">Embryonic intestine</tissue>
    </source>
</reference>
<reference evidence="10" key="2">
    <citation type="journal article" date="2004" name="Genome Res.">
        <title>The status, quality, and expansion of the NIH full-length cDNA project: the Mammalian Gene Collection (MGC).</title>
        <authorList>
            <consortium name="The MGC Project Team"/>
        </authorList>
    </citation>
    <scope>NUCLEOTIDE SEQUENCE [LARGE SCALE MRNA]</scope>
    <source>
        <strain evidence="10">FVB/N</strain>
        <tissue evidence="10">Mammary gland</tissue>
    </source>
</reference>
<reference key="3">
    <citation type="journal article" date="2010" name="Cell">
        <title>A tissue-specific atlas of mouse protein phosphorylation and expression.</title>
        <authorList>
            <person name="Huttlin E.L."/>
            <person name="Jedrychowski M.P."/>
            <person name="Elias J.E."/>
            <person name="Goswami T."/>
            <person name="Rad R."/>
            <person name="Beausoleil S.A."/>
            <person name="Villen J."/>
            <person name="Haas W."/>
            <person name="Sowa M.E."/>
            <person name="Gygi S.P."/>
        </authorList>
    </citation>
    <scope>PHOSPHORYLATION [LARGE SCALE ANALYSIS] AT SER-527; SER-531; THR-576 AND SER-598</scope>
    <scope>IDENTIFICATION BY MASS SPECTROMETRY [LARGE SCALE ANALYSIS]</scope>
    <source>
        <tissue>Kidney</tissue>
        <tissue>Testis</tissue>
    </source>
</reference>
<accession>Q8VDG6</accession>
<accession>Q5DTU6</accession>
<accession>Q811F5</accession>
<protein>
    <recommendedName>
        <fullName>Mitogen-activated protein kinase kinase kinase 21</fullName>
        <ecNumber>2.7.11.25</ecNumber>
    </recommendedName>
    <alternativeName>
        <fullName>Mitogen-activated protein kinase kinase kinase MLK4</fullName>
    </alternativeName>
    <alternativeName>
        <fullName>Mixed lineage kinase 4</fullName>
    </alternativeName>
</protein>
<dbReference type="EC" id="2.7.11.25"/>
<dbReference type="EMBL" id="AK220424">
    <property type="protein sequence ID" value="BAD90469.1"/>
    <property type="status" value="ALT_SEQ"/>
    <property type="molecule type" value="mRNA"/>
</dbReference>
<dbReference type="EMBL" id="BC021891">
    <property type="protein sequence ID" value="AAH21891.1"/>
    <property type="molecule type" value="mRNA"/>
</dbReference>
<dbReference type="EMBL" id="BC046448">
    <property type="protein sequence ID" value="AAH46448.1"/>
    <property type="molecule type" value="mRNA"/>
</dbReference>
<dbReference type="CCDS" id="CCDS40519.1"/>
<dbReference type="RefSeq" id="NP_663583.2">
    <property type="nucleotide sequence ID" value="NM_145608.2"/>
</dbReference>
<dbReference type="SMR" id="Q8VDG6"/>
<dbReference type="FunCoup" id="Q8VDG6">
    <property type="interactions" value="397"/>
</dbReference>
<dbReference type="STRING" id="10090.ENSMUSP00000034316"/>
<dbReference type="iPTMnet" id="Q8VDG6"/>
<dbReference type="PhosphoSitePlus" id="Q8VDG6"/>
<dbReference type="PaxDb" id="10090-ENSMUSP00000034316"/>
<dbReference type="PeptideAtlas" id="Q8VDG6"/>
<dbReference type="ProteomicsDB" id="252698"/>
<dbReference type="Antibodypedia" id="2080">
    <property type="antibodies" value="218 antibodies from 30 providers"/>
</dbReference>
<dbReference type="DNASU" id="234878"/>
<dbReference type="Ensembl" id="ENSMUST00000034316.6">
    <property type="protein sequence ID" value="ENSMUSP00000034316.5"/>
    <property type="gene ID" value="ENSMUSG00000031853.6"/>
</dbReference>
<dbReference type="GeneID" id="234878"/>
<dbReference type="KEGG" id="mmu:234878"/>
<dbReference type="UCSC" id="uc009nyq.1">
    <property type="organism name" value="mouse"/>
</dbReference>
<dbReference type="AGR" id="MGI:2385307"/>
<dbReference type="CTD" id="84451"/>
<dbReference type="MGI" id="MGI:2385307">
    <property type="gene designation" value="Map3k21"/>
</dbReference>
<dbReference type="VEuPathDB" id="HostDB:ENSMUSG00000031853"/>
<dbReference type="eggNOG" id="KOG0192">
    <property type="taxonomic scope" value="Eukaryota"/>
</dbReference>
<dbReference type="GeneTree" id="ENSGT00940000159629"/>
<dbReference type="HOGENOM" id="CLU_000288_7_14_1"/>
<dbReference type="InParanoid" id="Q8VDG6"/>
<dbReference type="OMA" id="KDRASHH"/>
<dbReference type="OrthoDB" id="339325at2759"/>
<dbReference type="PhylomeDB" id="Q8VDG6"/>
<dbReference type="TreeFam" id="TF105118"/>
<dbReference type="BioGRID-ORCS" id="234878">
    <property type="hits" value="3 hits in 75 CRISPR screens"/>
</dbReference>
<dbReference type="ChiTaRS" id="Map3k21">
    <property type="organism name" value="mouse"/>
</dbReference>
<dbReference type="PRO" id="PR:Q8VDG6"/>
<dbReference type="Proteomes" id="UP000000589">
    <property type="component" value="Chromosome 8"/>
</dbReference>
<dbReference type="RNAct" id="Q8VDG6">
    <property type="molecule type" value="protein"/>
</dbReference>
<dbReference type="Bgee" id="ENSMUSG00000031853">
    <property type="expression patterns" value="Expressed in ureteric bud tip and 78 other cell types or tissues"/>
</dbReference>
<dbReference type="GO" id="GO:0005524">
    <property type="term" value="F:ATP binding"/>
    <property type="evidence" value="ECO:0007669"/>
    <property type="project" value="UniProtKB-KW"/>
</dbReference>
<dbReference type="GO" id="GO:0004709">
    <property type="term" value="F:MAP kinase kinase kinase activity"/>
    <property type="evidence" value="ECO:0007669"/>
    <property type="project" value="UniProtKB-EC"/>
</dbReference>
<dbReference type="GO" id="GO:0106310">
    <property type="term" value="F:protein serine kinase activity"/>
    <property type="evidence" value="ECO:0007669"/>
    <property type="project" value="RHEA"/>
</dbReference>
<dbReference type="FunFam" id="1.10.510.10:FF:000076">
    <property type="entry name" value="Mitogen-activated protein kinase kinase kinase"/>
    <property type="match status" value="1"/>
</dbReference>
<dbReference type="FunFam" id="2.30.30.40:FF:000169">
    <property type="entry name" value="Mitogen-activated protein kinase kinase kinase"/>
    <property type="match status" value="1"/>
</dbReference>
<dbReference type="FunFam" id="3.30.200.20:FF:000085">
    <property type="entry name" value="Mitogen-activated protein kinase kinase kinase"/>
    <property type="match status" value="1"/>
</dbReference>
<dbReference type="Gene3D" id="3.30.200.20">
    <property type="entry name" value="Phosphorylase Kinase, domain 1"/>
    <property type="match status" value="1"/>
</dbReference>
<dbReference type="Gene3D" id="2.30.30.40">
    <property type="entry name" value="SH3 Domains"/>
    <property type="match status" value="1"/>
</dbReference>
<dbReference type="Gene3D" id="1.10.510.10">
    <property type="entry name" value="Transferase(Phosphotransferase) domain 1"/>
    <property type="match status" value="1"/>
</dbReference>
<dbReference type="InterPro" id="IPR011009">
    <property type="entry name" value="Kinase-like_dom_sf"/>
</dbReference>
<dbReference type="InterPro" id="IPR016231">
    <property type="entry name" value="MLK1-4"/>
</dbReference>
<dbReference type="InterPro" id="IPR000719">
    <property type="entry name" value="Prot_kinase_dom"/>
</dbReference>
<dbReference type="InterPro" id="IPR017441">
    <property type="entry name" value="Protein_kinase_ATP_BS"/>
</dbReference>
<dbReference type="InterPro" id="IPR001245">
    <property type="entry name" value="Ser-Thr/Tyr_kinase_cat_dom"/>
</dbReference>
<dbReference type="InterPro" id="IPR008271">
    <property type="entry name" value="Ser/Thr_kinase_AS"/>
</dbReference>
<dbReference type="InterPro" id="IPR051681">
    <property type="entry name" value="Ser/Thr_Kinases-Pseudokinases"/>
</dbReference>
<dbReference type="InterPro" id="IPR036028">
    <property type="entry name" value="SH3-like_dom_sf"/>
</dbReference>
<dbReference type="InterPro" id="IPR001452">
    <property type="entry name" value="SH3_domain"/>
</dbReference>
<dbReference type="PANTHER" id="PTHR44329:SF30">
    <property type="entry name" value="MITOGEN-ACTIVATED PROTEIN KINASE KINASE KINASE 21"/>
    <property type="match status" value="1"/>
</dbReference>
<dbReference type="PANTHER" id="PTHR44329">
    <property type="entry name" value="SERINE/THREONINE-PROTEIN KINASE TNNI3K-RELATED"/>
    <property type="match status" value="1"/>
</dbReference>
<dbReference type="Pfam" id="PF07714">
    <property type="entry name" value="PK_Tyr_Ser-Thr"/>
    <property type="match status" value="1"/>
</dbReference>
<dbReference type="Pfam" id="PF14604">
    <property type="entry name" value="SH3_9"/>
    <property type="match status" value="1"/>
</dbReference>
<dbReference type="PIRSF" id="PIRSF000556">
    <property type="entry name" value="MAPKKK9_11"/>
    <property type="match status" value="1"/>
</dbReference>
<dbReference type="PRINTS" id="PR00452">
    <property type="entry name" value="SH3DOMAIN"/>
</dbReference>
<dbReference type="PRINTS" id="PR00109">
    <property type="entry name" value="TYRKINASE"/>
</dbReference>
<dbReference type="SMART" id="SM00220">
    <property type="entry name" value="S_TKc"/>
    <property type="match status" value="1"/>
</dbReference>
<dbReference type="SMART" id="SM00326">
    <property type="entry name" value="SH3"/>
    <property type="match status" value="1"/>
</dbReference>
<dbReference type="SUPFAM" id="SSF56112">
    <property type="entry name" value="Protein kinase-like (PK-like)"/>
    <property type="match status" value="1"/>
</dbReference>
<dbReference type="SUPFAM" id="SSF50044">
    <property type="entry name" value="SH3-domain"/>
    <property type="match status" value="1"/>
</dbReference>
<dbReference type="PROSITE" id="PS00107">
    <property type="entry name" value="PROTEIN_KINASE_ATP"/>
    <property type="match status" value="1"/>
</dbReference>
<dbReference type="PROSITE" id="PS50011">
    <property type="entry name" value="PROTEIN_KINASE_DOM"/>
    <property type="match status" value="1"/>
</dbReference>
<dbReference type="PROSITE" id="PS00108">
    <property type="entry name" value="PROTEIN_KINASE_ST"/>
    <property type="match status" value="1"/>
</dbReference>
<dbReference type="PROSITE" id="PS50002">
    <property type="entry name" value="SH3"/>
    <property type="match status" value="1"/>
</dbReference>
<comment type="function">
    <text evidence="1">Negative regulator of TLR4 signaling. Does not activate JNK1/MAPK8 pathway, p38/MAPK14, nor ERK2/MAPK1 pathways (By similarity).</text>
</comment>
<comment type="catalytic activity">
    <reaction evidence="3">
        <text>L-seryl-[protein] + ATP = O-phospho-L-seryl-[protein] + ADP + H(+)</text>
        <dbReference type="Rhea" id="RHEA:17989"/>
        <dbReference type="Rhea" id="RHEA-COMP:9863"/>
        <dbReference type="Rhea" id="RHEA-COMP:11604"/>
        <dbReference type="ChEBI" id="CHEBI:15378"/>
        <dbReference type="ChEBI" id="CHEBI:29999"/>
        <dbReference type="ChEBI" id="CHEBI:30616"/>
        <dbReference type="ChEBI" id="CHEBI:83421"/>
        <dbReference type="ChEBI" id="CHEBI:456216"/>
        <dbReference type="EC" id="2.7.11.25"/>
    </reaction>
</comment>
<comment type="catalytic activity">
    <reaction evidence="3">
        <text>L-threonyl-[protein] + ATP = O-phospho-L-threonyl-[protein] + ADP + H(+)</text>
        <dbReference type="Rhea" id="RHEA:46608"/>
        <dbReference type="Rhea" id="RHEA-COMP:11060"/>
        <dbReference type="Rhea" id="RHEA-COMP:11605"/>
        <dbReference type="ChEBI" id="CHEBI:15378"/>
        <dbReference type="ChEBI" id="CHEBI:30013"/>
        <dbReference type="ChEBI" id="CHEBI:30616"/>
        <dbReference type="ChEBI" id="CHEBI:61977"/>
        <dbReference type="ChEBI" id="CHEBI:456216"/>
        <dbReference type="EC" id="2.7.11.25"/>
    </reaction>
</comment>
<comment type="cofactor">
    <cofactor evidence="3">
        <name>Mg(2+)</name>
        <dbReference type="ChEBI" id="CHEBI:18420"/>
    </cofactor>
</comment>
<comment type="activity regulation">
    <text evidence="3">Homodimerization via the leucine zipper domains is required for autophosphorylation and subsequent activation.</text>
</comment>
<comment type="subunit">
    <text evidence="1">Homodimer. Interacts with TLR4.</text>
</comment>
<comment type="PTM">
    <text evidence="3">Autophosphorylation on serine and threonine residues within the activation loop plays a role in enzyme activation.</text>
</comment>
<comment type="similarity">
    <text evidence="3">Belongs to the protein kinase superfamily. STE Ser/Thr protein kinase family. MAP kinase kinase kinase subfamily.</text>
</comment>
<comment type="sequence caution" evidence="9">
    <conflict type="erroneous initiation">
        <sequence resource="EMBL-CDS" id="BAD90469"/>
    </conflict>
    <text>Extended N-terminus.</text>
</comment>
<comment type="sequence caution" evidence="9">
    <conflict type="frameshift">
        <sequence resource="EMBL-CDS" id="BAD90469"/>
    </conflict>
</comment>
<name>M3K21_MOUSE</name>
<gene>
    <name type="primary">Map3k21</name>
    <name type="synonym">Kiaa1804</name>
    <name type="synonym">Mlk4</name>
</gene>